<organism>
    <name type="scientific">Allorhizobium ampelinum (strain ATCC BAA-846 / DSM 112012 / S4)</name>
    <name type="common">Agrobacterium vitis (strain S4)</name>
    <dbReference type="NCBI Taxonomy" id="311402"/>
    <lineage>
        <taxon>Bacteria</taxon>
        <taxon>Pseudomonadati</taxon>
        <taxon>Pseudomonadota</taxon>
        <taxon>Alphaproteobacteria</taxon>
        <taxon>Hyphomicrobiales</taxon>
        <taxon>Rhizobiaceae</taxon>
        <taxon>Rhizobium/Agrobacterium group</taxon>
        <taxon>Allorhizobium</taxon>
        <taxon>Allorhizobium ampelinum</taxon>
    </lineage>
</organism>
<dbReference type="EMBL" id="CP000633">
    <property type="protein sequence ID" value="ACM38106.1"/>
    <property type="molecule type" value="Genomic_DNA"/>
</dbReference>
<dbReference type="RefSeq" id="WP_015917517.1">
    <property type="nucleotide sequence ID" value="NC_011989.1"/>
</dbReference>
<dbReference type="SMR" id="B9JUI3"/>
<dbReference type="STRING" id="311402.Avi_4287"/>
<dbReference type="GeneID" id="60683611"/>
<dbReference type="KEGG" id="avi:Avi_4287"/>
<dbReference type="eggNOG" id="COG0211">
    <property type="taxonomic scope" value="Bacteria"/>
</dbReference>
<dbReference type="HOGENOM" id="CLU_095424_4_1_5"/>
<dbReference type="Proteomes" id="UP000001596">
    <property type="component" value="Chromosome 1"/>
</dbReference>
<dbReference type="GO" id="GO:0022625">
    <property type="term" value="C:cytosolic large ribosomal subunit"/>
    <property type="evidence" value="ECO:0007669"/>
    <property type="project" value="TreeGrafter"/>
</dbReference>
<dbReference type="GO" id="GO:0003735">
    <property type="term" value="F:structural constituent of ribosome"/>
    <property type="evidence" value="ECO:0007669"/>
    <property type="project" value="InterPro"/>
</dbReference>
<dbReference type="GO" id="GO:0006412">
    <property type="term" value="P:translation"/>
    <property type="evidence" value="ECO:0007669"/>
    <property type="project" value="UniProtKB-UniRule"/>
</dbReference>
<dbReference type="FunFam" id="2.40.50.100:FF:000020">
    <property type="entry name" value="50S ribosomal protein L27"/>
    <property type="match status" value="1"/>
</dbReference>
<dbReference type="Gene3D" id="2.40.50.100">
    <property type="match status" value="1"/>
</dbReference>
<dbReference type="HAMAP" id="MF_00539">
    <property type="entry name" value="Ribosomal_bL27"/>
    <property type="match status" value="1"/>
</dbReference>
<dbReference type="InterPro" id="IPR001684">
    <property type="entry name" value="Ribosomal_bL27"/>
</dbReference>
<dbReference type="InterPro" id="IPR018261">
    <property type="entry name" value="Ribosomal_bL27_CS"/>
</dbReference>
<dbReference type="NCBIfam" id="TIGR00062">
    <property type="entry name" value="L27"/>
    <property type="match status" value="1"/>
</dbReference>
<dbReference type="PANTHER" id="PTHR15893:SF0">
    <property type="entry name" value="LARGE RIBOSOMAL SUBUNIT PROTEIN BL27M"/>
    <property type="match status" value="1"/>
</dbReference>
<dbReference type="PANTHER" id="PTHR15893">
    <property type="entry name" value="RIBOSOMAL PROTEIN L27"/>
    <property type="match status" value="1"/>
</dbReference>
<dbReference type="Pfam" id="PF01016">
    <property type="entry name" value="Ribosomal_L27"/>
    <property type="match status" value="1"/>
</dbReference>
<dbReference type="PRINTS" id="PR00063">
    <property type="entry name" value="RIBOSOMALL27"/>
</dbReference>
<dbReference type="SUPFAM" id="SSF110324">
    <property type="entry name" value="Ribosomal L27 protein-like"/>
    <property type="match status" value="1"/>
</dbReference>
<dbReference type="PROSITE" id="PS00831">
    <property type="entry name" value="RIBOSOMAL_L27"/>
    <property type="match status" value="1"/>
</dbReference>
<keyword id="KW-1185">Reference proteome</keyword>
<keyword id="KW-0687">Ribonucleoprotein</keyword>
<keyword id="KW-0689">Ribosomal protein</keyword>
<feature type="chain" id="PRO_1000195869" description="Large ribosomal subunit protein bL27">
    <location>
        <begin position="1"/>
        <end position="90"/>
    </location>
</feature>
<feature type="region of interest" description="Disordered" evidence="2">
    <location>
        <begin position="1"/>
        <end position="22"/>
    </location>
</feature>
<comment type="similarity">
    <text evidence="1">Belongs to the bacterial ribosomal protein bL27 family.</text>
</comment>
<gene>
    <name evidence="1" type="primary">rpmA</name>
    <name type="ordered locus">Avi_4287</name>
</gene>
<name>RL27_ALLAM</name>
<reference key="1">
    <citation type="journal article" date="2009" name="J. Bacteriol.">
        <title>Genome sequences of three Agrobacterium biovars help elucidate the evolution of multichromosome genomes in bacteria.</title>
        <authorList>
            <person name="Slater S.C."/>
            <person name="Goldman B.S."/>
            <person name="Goodner B."/>
            <person name="Setubal J.C."/>
            <person name="Farrand S.K."/>
            <person name="Nester E.W."/>
            <person name="Burr T.J."/>
            <person name="Banta L."/>
            <person name="Dickerman A.W."/>
            <person name="Paulsen I."/>
            <person name="Otten L."/>
            <person name="Suen G."/>
            <person name="Welch R."/>
            <person name="Almeida N.F."/>
            <person name="Arnold F."/>
            <person name="Burton O.T."/>
            <person name="Du Z."/>
            <person name="Ewing A."/>
            <person name="Godsy E."/>
            <person name="Heisel S."/>
            <person name="Houmiel K.L."/>
            <person name="Jhaveri J."/>
            <person name="Lu J."/>
            <person name="Miller N.M."/>
            <person name="Norton S."/>
            <person name="Chen Q."/>
            <person name="Phoolcharoen W."/>
            <person name="Ohlin V."/>
            <person name="Ondrusek D."/>
            <person name="Pride N."/>
            <person name="Stricklin S.L."/>
            <person name="Sun J."/>
            <person name="Wheeler C."/>
            <person name="Wilson L."/>
            <person name="Zhu H."/>
            <person name="Wood D.W."/>
        </authorList>
    </citation>
    <scope>NUCLEOTIDE SEQUENCE [LARGE SCALE GENOMIC DNA]</scope>
    <source>
        <strain>ATCC BAA-846 / DSM 112012 / S4</strain>
    </source>
</reference>
<evidence type="ECO:0000255" key="1">
    <source>
        <dbReference type="HAMAP-Rule" id="MF_00539"/>
    </source>
</evidence>
<evidence type="ECO:0000256" key="2">
    <source>
        <dbReference type="SAM" id="MobiDB-lite"/>
    </source>
</evidence>
<evidence type="ECO:0000305" key="3"/>
<accession>B9JUI3</accession>
<proteinExistence type="inferred from homology"/>
<protein>
    <recommendedName>
        <fullName evidence="1">Large ribosomal subunit protein bL27</fullName>
    </recommendedName>
    <alternativeName>
        <fullName evidence="3">50S ribosomal protein L27</fullName>
    </alternativeName>
</protein>
<sequence>MAHKKAGGSSRNGRDSESKRLGVKKFGGEVVIPGNIIVRQRGTQWHPGANVGMGKDHTIFALTTGNVTYRTKSNGRVFVSVMPKTAEAAE</sequence>